<comment type="function">
    <text evidence="1">Part of the Sec protein translocase complex. Interacts with the SecYEG preprotein conducting channel. Has a central role in coupling the hydrolysis of ATP to the transfer of proteins into and across the cell membrane, serving as an ATP-driven molecular motor driving the stepwise translocation of polypeptide chains across the membrane.</text>
</comment>
<comment type="catalytic activity">
    <reaction evidence="1">
        <text>ATP + H2O + cellular proteinSide 1 = ADP + phosphate + cellular proteinSide 2.</text>
        <dbReference type="EC" id="7.4.2.8"/>
    </reaction>
</comment>
<comment type="subunit">
    <text evidence="1">Monomer and homodimer. Part of the essential Sec protein translocation apparatus which comprises SecA, SecYEG and auxiliary proteins SecDF. Other proteins may also be involved.</text>
</comment>
<comment type="subcellular location">
    <subcellularLocation>
        <location evidence="1">Cell inner membrane</location>
        <topology evidence="1">Peripheral membrane protein</topology>
        <orientation evidence="1">Cytoplasmic side</orientation>
    </subcellularLocation>
    <subcellularLocation>
        <location evidence="1">Cytoplasm</location>
    </subcellularLocation>
    <text evidence="1">Distribution is 50-50.</text>
</comment>
<comment type="similarity">
    <text evidence="1">Belongs to the SecA family.</text>
</comment>
<sequence>MFQKILTILFGSKYERDLKRLNPIVETINSFEVTIKAMDDETLSSQTKKFKERLASGETLDDILPEAFATVREVAYRTLGMRHFDVQMMGGISLHWGNISEMKTGEGKTLTSTLPIYLNSLSGEGVHVVTVNDYLAKRDANWMRPVFEFLKVSVGVIQHDMDHEERKVAYNSDITYGTNNEFGFDYLRDNMVSYKEHRVQRQHNFAIVDEVDSILIDEARTPLIISGPAEESTDKYLKVNKIIPKLVEGEDFEIDEKAKNVILSEAGVHHVEKLLEVDNLYHAENIELVHHVQQALKAHKIFFKDKDYVVQDGEVIIVDEFTGRLMKGRRYSDGLHQSLEAKEGVPIARESQTLASITFQNYFRIYKKLAGMTGTADTEAEEFKKIYNLDVIVIPSNLKIQRQDMPDRVYKTEREKFDAVVKDIQEKVSRKQPVLVGTISIEKSEVLSKLLFSHGIQHNVLNAKQHERESEIVANAGKPGAITIATNMAGRGTDIVLGGAPKYKDDLEKLDDKCDSLGIKNKEELEIIYSFRECLIKQKFDEAEGKISDVRNETIKKECIKILGDAKKWKVDHDFVIGAGGLHIIGSERHESRRIDNQLRGRSGRQGDPGSSRFYLSLQDDLMRIFGSDRIARIMDTLKMPEGQELEHSMVSNAIARAQKRVEGHNFDIRKHLLEYDDVMNRQRIYIYGIRNELLDKGNMSKTVFDFFDEVVENQVILYCEGNNADAWEIDSLNEWLQSLGIDHKIESKDFKKESNPQLKVFEVVSKLVKELYDYKVSSIGDEIWRSIERNVFLDILDHRWKEHLYAMDHLKEGIWTVGYGEKNPLIEYKLQGFKMFDQLVDNLKNEVVSFLLKIEVTESDKKQDDTSPKEYKKIGQEQRAEVDMFGNELKSNKTKPQVSSTTSSGGGSERRSSRRKK</sequence>
<dbReference type="EC" id="7.4.2.8" evidence="1"/>
<dbReference type="EMBL" id="CP000786">
    <property type="protein sequence ID" value="ABZ98928.1"/>
    <property type="molecule type" value="Genomic_DNA"/>
</dbReference>
<dbReference type="RefSeq" id="WP_012389786.1">
    <property type="nucleotide sequence ID" value="NC_010602.1"/>
</dbReference>
<dbReference type="SMR" id="B0SNG1"/>
<dbReference type="STRING" id="456481.LEPBI_I2859"/>
<dbReference type="KEGG" id="lbi:LEPBI_I2859"/>
<dbReference type="HOGENOM" id="CLU_005314_3_0_12"/>
<dbReference type="OrthoDB" id="9805579at2"/>
<dbReference type="BioCyc" id="LBIF456481:LEPBI_RS14000-MONOMER"/>
<dbReference type="Proteomes" id="UP000001847">
    <property type="component" value="Chromosome I"/>
</dbReference>
<dbReference type="GO" id="GO:0031522">
    <property type="term" value="C:cell envelope Sec protein transport complex"/>
    <property type="evidence" value="ECO:0007669"/>
    <property type="project" value="TreeGrafter"/>
</dbReference>
<dbReference type="GO" id="GO:0005829">
    <property type="term" value="C:cytosol"/>
    <property type="evidence" value="ECO:0007669"/>
    <property type="project" value="TreeGrafter"/>
</dbReference>
<dbReference type="GO" id="GO:0005886">
    <property type="term" value="C:plasma membrane"/>
    <property type="evidence" value="ECO:0007669"/>
    <property type="project" value="UniProtKB-SubCell"/>
</dbReference>
<dbReference type="GO" id="GO:0005524">
    <property type="term" value="F:ATP binding"/>
    <property type="evidence" value="ECO:0007669"/>
    <property type="project" value="UniProtKB-UniRule"/>
</dbReference>
<dbReference type="GO" id="GO:0008564">
    <property type="term" value="F:protein-exporting ATPase activity"/>
    <property type="evidence" value="ECO:0007669"/>
    <property type="project" value="UniProtKB-EC"/>
</dbReference>
<dbReference type="GO" id="GO:0065002">
    <property type="term" value="P:intracellular protein transmembrane transport"/>
    <property type="evidence" value="ECO:0007669"/>
    <property type="project" value="UniProtKB-UniRule"/>
</dbReference>
<dbReference type="GO" id="GO:0017038">
    <property type="term" value="P:protein import"/>
    <property type="evidence" value="ECO:0007669"/>
    <property type="project" value="InterPro"/>
</dbReference>
<dbReference type="GO" id="GO:0006605">
    <property type="term" value="P:protein targeting"/>
    <property type="evidence" value="ECO:0007669"/>
    <property type="project" value="UniProtKB-UniRule"/>
</dbReference>
<dbReference type="GO" id="GO:0043952">
    <property type="term" value="P:protein transport by the Sec complex"/>
    <property type="evidence" value="ECO:0007669"/>
    <property type="project" value="TreeGrafter"/>
</dbReference>
<dbReference type="CDD" id="cd17928">
    <property type="entry name" value="DEXDc_SecA"/>
    <property type="match status" value="1"/>
</dbReference>
<dbReference type="CDD" id="cd18803">
    <property type="entry name" value="SF2_C_secA"/>
    <property type="match status" value="1"/>
</dbReference>
<dbReference type="FunFam" id="3.90.1440.10:FF:000001">
    <property type="entry name" value="Preprotein translocase subunit SecA"/>
    <property type="match status" value="1"/>
</dbReference>
<dbReference type="Gene3D" id="1.10.3060.10">
    <property type="entry name" value="Helical scaffold and wing domains of SecA"/>
    <property type="match status" value="1"/>
</dbReference>
<dbReference type="Gene3D" id="3.40.50.300">
    <property type="entry name" value="P-loop containing nucleotide triphosphate hydrolases"/>
    <property type="match status" value="2"/>
</dbReference>
<dbReference type="Gene3D" id="3.90.1440.10">
    <property type="entry name" value="SecA, preprotein cross-linking domain"/>
    <property type="match status" value="1"/>
</dbReference>
<dbReference type="HAMAP" id="MF_01382">
    <property type="entry name" value="SecA"/>
    <property type="match status" value="1"/>
</dbReference>
<dbReference type="InterPro" id="IPR014001">
    <property type="entry name" value="Helicase_ATP-bd"/>
</dbReference>
<dbReference type="InterPro" id="IPR027417">
    <property type="entry name" value="P-loop_NTPase"/>
</dbReference>
<dbReference type="InterPro" id="IPR000185">
    <property type="entry name" value="SecA"/>
</dbReference>
<dbReference type="InterPro" id="IPR020937">
    <property type="entry name" value="SecA_CS"/>
</dbReference>
<dbReference type="InterPro" id="IPR011115">
    <property type="entry name" value="SecA_DEAD"/>
</dbReference>
<dbReference type="InterPro" id="IPR014018">
    <property type="entry name" value="SecA_motor_DEAD"/>
</dbReference>
<dbReference type="InterPro" id="IPR011130">
    <property type="entry name" value="SecA_preprotein_X-link_dom"/>
</dbReference>
<dbReference type="InterPro" id="IPR044722">
    <property type="entry name" value="SecA_SF2_C"/>
</dbReference>
<dbReference type="InterPro" id="IPR011116">
    <property type="entry name" value="SecA_Wing/Scaffold"/>
</dbReference>
<dbReference type="InterPro" id="IPR036266">
    <property type="entry name" value="SecA_Wing/Scaffold_sf"/>
</dbReference>
<dbReference type="InterPro" id="IPR036670">
    <property type="entry name" value="SecA_X-link_sf"/>
</dbReference>
<dbReference type="NCBIfam" id="NF009538">
    <property type="entry name" value="PRK12904.1"/>
    <property type="match status" value="1"/>
</dbReference>
<dbReference type="NCBIfam" id="TIGR00963">
    <property type="entry name" value="secA"/>
    <property type="match status" value="1"/>
</dbReference>
<dbReference type="PANTHER" id="PTHR30612:SF0">
    <property type="entry name" value="CHLOROPLAST PROTEIN-TRANSPORTING ATPASE"/>
    <property type="match status" value="1"/>
</dbReference>
<dbReference type="PANTHER" id="PTHR30612">
    <property type="entry name" value="SECA INNER MEMBRANE COMPONENT OF SEC PROTEIN SECRETION SYSTEM"/>
    <property type="match status" value="1"/>
</dbReference>
<dbReference type="Pfam" id="PF21090">
    <property type="entry name" value="P-loop_SecA"/>
    <property type="match status" value="1"/>
</dbReference>
<dbReference type="Pfam" id="PF07517">
    <property type="entry name" value="SecA_DEAD"/>
    <property type="match status" value="1"/>
</dbReference>
<dbReference type="Pfam" id="PF01043">
    <property type="entry name" value="SecA_PP_bind"/>
    <property type="match status" value="1"/>
</dbReference>
<dbReference type="Pfam" id="PF07516">
    <property type="entry name" value="SecA_SW"/>
    <property type="match status" value="1"/>
</dbReference>
<dbReference type="PRINTS" id="PR00906">
    <property type="entry name" value="SECA"/>
</dbReference>
<dbReference type="SMART" id="SM00957">
    <property type="entry name" value="SecA_DEAD"/>
    <property type="match status" value="1"/>
</dbReference>
<dbReference type="SMART" id="SM00958">
    <property type="entry name" value="SecA_PP_bind"/>
    <property type="match status" value="1"/>
</dbReference>
<dbReference type="SUPFAM" id="SSF81886">
    <property type="entry name" value="Helical scaffold and wing domains of SecA"/>
    <property type="match status" value="1"/>
</dbReference>
<dbReference type="SUPFAM" id="SSF52540">
    <property type="entry name" value="P-loop containing nucleoside triphosphate hydrolases"/>
    <property type="match status" value="2"/>
</dbReference>
<dbReference type="SUPFAM" id="SSF81767">
    <property type="entry name" value="Pre-protein crosslinking domain of SecA"/>
    <property type="match status" value="1"/>
</dbReference>
<dbReference type="PROSITE" id="PS01312">
    <property type="entry name" value="SECA"/>
    <property type="match status" value="1"/>
</dbReference>
<dbReference type="PROSITE" id="PS51196">
    <property type="entry name" value="SECA_MOTOR_DEAD"/>
    <property type="match status" value="1"/>
</dbReference>
<feature type="chain" id="PRO_1000184236" description="Protein translocase subunit SecA">
    <location>
        <begin position="1"/>
        <end position="918"/>
    </location>
</feature>
<feature type="region of interest" description="Disordered" evidence="2">
    <location>
        <begin position="863"/>
        <end position="918"/>
    </location>
</feature>
<feature type="compositionally biased region" description="Basic and acidic residues" evidence="2">
    <location>
        <begin position="863"/>
        <end position="883"/>
    </location>
</feature>
<feature type="binding site" evidence="1">
    <location>
        <position position="87"/>
    </location>
    <ligand>
        <name>ATP</name>
        <dbReference type="ChEBI" id="CHEBI:30616"/>
    </ligand>
</feature>
<feature type="binding site" evidence="1">
    <location>
        <begin position="105"/>
        <end position="109"/>
    </location>
    <ligand>
        <name>ATP</name>
        <dbReference type="ChEBI" id="CHEBI:30616"/>
    </ligand>
</feature>
<feature type="binding site" evidence="1">
    <location>
        <position position="494"/>
    </location>
    <ligand>
        <name>ATP</name>
        <dbReference type="ChEBI" id="CHEBI:30616"/>
    </ligand>
</feature>
<protein>
    <recommendedName>
        <fullName evidence="1">Protein translocase subunit SecA</fullName>
        <ecNumber evidence="1">7.4.2.8</ecNumber>
    </recommendedName>
</protein>
<keyword id="KW-0067">ATP-binding</keyword>
<keyword id="KW-0997">Cell inner membrane</keyword>
<keyword id="KW-1003">Cell membrane</keyword>
<keyword id="KW-0963">Cytoplasm</keyword>
<keyword id="KW-0472">Membrane</keyword>
<keyword id="KW-0547">Nucleotide-binding</keyword>
<keyword id="KW-0653">Protein transport</keyword>
<keyword id="KW-1185">Reference proteome</keyword>
<keyword id="KW-1278">Translocase</keyword>
<keyword id="KW-0811">Translocation</keyword>
<keyword id="KW-0813">Transport</keyword>
<evidence type="ECO:0000255" key="1">
    <source>
        <dbReference type="HAMAP-Rule" id="MF_01382"/>
    </source>
</evidence>
<evidence type="ECO:0000256" key="2">
    <source>
        <dbReference type="SAM" id="MobiDB-lite"/>
    </source>
</evidence>
<gene>
    <name evidence="1" type="primary">secA</name>
    <name type="ordered locus">LEPBI_I2859</name>
</gene>
<accession>B0SNG1</accession>
<proteinExistence type="inferred from homology"/>
<name>SECA_LEPBP</name>
<reference key="1">
    <citation type="journal article" date="2008" name="PLoS ONE">
        <title>Genome sequence of the saprophyte Leptospira biflexa provides insights into the evolution of Leptospira and the pathogenesis of leptospirosis.</title>
        <authorList>
            <person name="Picardeau M."/>
            <person name="Bulach D.M."/>
            <person name="Bouchier C."/>
            <person name="Zuerner R.L."/>
            <person name="Zidane N."/>
            <person name="Wilson P.J."/>
            <person name="Creno S."/>
            <person name="Kuczek E.S."/>
            <person name="Bommezzadri S."/>
            <person name="Davis J.C."/>
            <person name="McGrath A."/>
            <person name="Johnson M.J."/>
            <person name="Boursaux-Eude C."/>
            <person name="Seemann T."/>
            <person name="Rouy Z."/>
            <person name="Coppel R.L."/>
            <person name="Rood J.I."/>
            <person name="Lajus A."/>
            <person name="Davies J.K."/>
            <person name="Medigue C."/>
            <person name="Adler B."/>
        </authorList>
    </citation>
    <scope>NUCLEOTIDE SEQUENCE [LARGE SCALE GENOMIC DNA]</scope>
    <source>
        <strain>Patoc 1 / ATCC 23582 / Paris</strain>
    </source>
</reference>
<organism>
    <name type="scientific">Leptospira biflexa serovar Patoc (strain Patoc 1 / ATCC 23582 / Paris)</name>
    <dbReference type="NCBI Taxonomy" id="456481"/>
    <lineage>
        <taxon>Bacteria</taxon>
        <taxon>Pseudomonadati</taxon>
        <taxon>Spirochaetota</taxon>
        <taxon>Spirochaetia</taxon>
        <taxon>Leptospirales</taxon>
        <taxon>Leptospiraceae</taxon>
        <taxon>Leptospira</taxon>
    </lineage>
</organism>